<organism>
    <name type="scientific">Rhizobium meliloti (strain 1021)</name>
    <name type="common">Ensifer meliloti</name>
    <name type="synonym">Sinorhizobium meliloti</name>
    <dbReference type="NCBI Taxonomy" id="266834"/>
    <lineage>
        <taxon>Bacteria</taxon>
        <taxon>Pseudomonadati</taxon>
        <taxon>Pseudomonadota</taxon>
        <taxon>Alphaproteobacteria</taxon>
        <taxon>Hyphomicrobiales</taxon>
        <taxon>Rhizobiaceae</taxon>
        <taxon>Sinorhizobium/Ensifer group</taxon>
        <taxon>Sinorhizobium</taxon>
    </lineage>
</organism>
<sequence length="641" mass="68950">MAKVIGIDLGTTNSCVSVMDGKDAKVIENAEGARTTPSMVAFTEDGERLVGQPAKRQAVTNPENTLFAIKRLIGRTFEDPTTQKDKGMVPYKIVKADNGDAWVEAHGTSYSPSQISAMILQKMKETAESYLGEKVEKAVITVPAYFNDAQRQATKDAGKIAGLDVLRIINEPTAAALAYGLDKKEGKTIAVYDLGGGTFDISVLEIGDGVFEVKSTNGDTFLGGEDFDMRLVEYLASEFKKEQGIDLKNDKLALQRLKEAAEKAKIELSSSQQTEINLPFITADASGPKHLTMKLSRAKFESLVEDLIQKTIAPCKAALKDAGVSAAEIDEVVLVGGMTRMPKVQETVKQLFGKEPHKGVNPDEVVAMGAAIQAGVLQGDVKDVLLLDVTPLSLGIETLGGVFTRLIERNTTIPTKKSQVFSTADDNQSAVTIRVSQGEREMAADNKLLGQFDLVGIPPAPRGVPQIEVTFDIDANGIVQVSAKDKGTGKEHQIRIQASGGLSDAEIEKMVKDAEANAEADKKRREGVEAKNQAESLVHSSEKSLQEHGDKVSETDRKAIEDAIAALKSAVEVSEPDAEDIKAKTNTLMEVSMKLGQAIYEAQQTDAAHADAAADAKRSGDDVVDADYEEVKDEDDRKRSA</sequence>
<keyword id="KW-0067">ATP-binding</keyword>
<keyword id="KW-0143">Chaperone</keyword>
<keyword id="KW-0547">Nucleotide-binding</keyword>
<keyword id="KW-0597">Phosphoprotein</keyword>
<keyword id="KW-1185">Reference proteome</keyword>
<keyword id="KW-0346">Stress response</keyword>
<dbReference type="EMBL" id="L36602">
    <property type="protein sequence ID" value="AAA64925.1"/>
    <property type="molecule type" value="Genomic_DNA"/>
</dbReference>
<dbReference type="EMBL" id="AL591688">
    <property type="protein sequence ID" value="CAC41569.1"/>
    <property type="molecule type" value="Genomic_DNA"/>
</dbReference>
<dbReference type="EMBL" id="AF074451">
    <property type="protein sequence ID" value="AAD42995.1"/>
    <property type="molecule type" value="Genomic_DNA"/>
</dbReference>
<dbReference type="RefSeq" id="NP_384288.1">
    <property type="nucleotide sequence ID" value="NC_003047.1"/>
</dbReference>
<dbReference type="RefSeq" id="WP_003531910.1">
    <property type="nucleotide sequence ID" value="NC_003047.1"/>
</dbReference>
<dbReference type="SMR" id="P42374"/>
<dbReference type="EnsemblBacteria" id="CAC41569">
    <property type="protein sequence ID" value="CAC41569"/>
    <property type="gene ID" value="SMc02857"/>
</dbReference>
<dbReference type="KEGG" id="sme:SMc02857"/>
<dbReference type="PATRIC" id="fig|266834.11.peg.1544"/>
<dbReference type="eggNOG" id="COG0443">
    <property type="taxonomic scope" value="Bacteria"/>
</dbReference>
<dbReference type="HOGENOM" id="CLU_005965_2_1_5"/>
<dbReference type="OrthoDB" id="9766019at2"/>
<dbReference type="Proteomes" id="UP000001976">
    <property type="component" value="Chromosome"/>
</dbReference>
<dbReference type="GO" id="GO:0005524">
    <property type="term" value="F:ATP binding"/>
    <property type="evidence" value="ECO:0007669"/>
    <property type="project" value="UniProtKB-UniRule"/>
</dbReference>
<dbReference type="GO" id="GO:0140662">
    <property type="term" value="F:ATP-dependent protein folding chaperone"/>
    <property type="evidence" value="ECO:0007669"/>
    <property type="project" value="InterPro"/>
</dbReference>
<dbReference type="GO" id="GO:0051082">
    <property type="term" value="F:unfolded protein binding"/>
    <property type="evidence" value="ECO:0007669"/>
    <property type="project" value="InterPro"/>
</dbReference>
<dbReference type="CDD" id="cd11733">
    <property type="entry name" value="ASKHA_NBD_HSP70_HSPA9"/>
    <property type="match status" value="1"/>
</dbReference>
<dbReference type="FunFam" id="2.60.34.10:FF:000014">
    <property type="entry name" value="Chaperone protein DnaK HSP70"/>
    <property type="match status" value="1"/>
</dbReference>
<dbReference type="FunFam" id="3.30.420.40:FF:000020">
    <property type="entry name" value="Chaperone protein HscA homolog"/>
    <property type="match status" value="1"/>
</dbReference>
<dbReference type="FunFam" id="3.30.30.30:FF:000003">
    <property type="entry name" value="Heat shock protein 9"/>
    <property type="match status" value="1"/>
</dbReference>
<dbReference type="FunFam" id="1.20.1270.10:FF:000001">
    <property type="entry name" value="Molecular chaperone DnaK"/>
    <property type="match status" value="1"/>
</dbReference>
<dbReference type="FunFam" id="3.30.420.40:FF:000004">
    <property type="entry name" value="Molecular chaperone DnaK"/>
    <property type="match status" value="1"/>
</dbReference>
<dbReference type="FunFam" id="3.90.640.10:FF:000003">
    <property type="entry name" value="Molecular chaperone DnaK"/>
    <property type="match status" value="1"/>
</dbReference>
<dbReference type="Gene3D" id="1.20.1270.10">
    <property type="match status" value="1"/>
</dbReference>
<dbReference type="Gene3D" id="3.30.420.40">
    <property type="match status" value="2"/>
</dbReference>
<dbReference type="Gene3D" id="3.90.640.10">
    <property type="entry name" value="Actin, Chain A, domain 4"/>
    <property type="match status" value="1"/>
</dbReference>
<dbReference type="Gene3D" id="2.60.34.10">
    <property type="entry name" value="Substrate Binding Domain Of DNAk, Chain A, domain 1"/>
    <property type="match status" value="1"/>
</dbReference>
<dbReference type="HAMAP" id="MF_00332">
    <property type="entry name" value="DnaK"/>
    <property type="match status" value="1"/>
</dbReference>
<dbReference type="InterPro" id="IPR043129">
    <property type="entry name" value="ATPase_NBD"/>
</dbReference>
<dbReference type="InterPro" id="IPR012725">
    <property type="entry name" value="Chaperone_DnaK"/>
</dbReference>
<dbReference type="InterPro" id="IPR018181">
    <property type="entry name" value="Heat_shock_70_CS"/>
</dbReference>
<dbReference type="InterPro" id="IPR029048">
    <property type="entry name" value="HSP70_C_sf"/>
</dbReference>
<dbReference type="InterPro" id="IPR029047">
    <property type="entry name" value="HSP70_peptide-bd_sf"/>
</dbReference>
<dbReference type="InterPro" id="IPR013126">
    <property type="entry name" value="Hsp_70_fam"/>
</dbReference>
<dbReference type="NCBIfam" id="NF001413">
    <property type="entry name" value="PRK00290.1"/>
    <property type="match status" value="1"/>
</dbReference>
<dbReference type="NCBIfam" id="NF003520">
    <property type="entry name" value="PRK05183.1"/>
    <property type="match status" value="1"/>
</dbReference>
<dbReference type="NCBIfam" id="TIGR02350">
    <property type="entry name" value="prok_dnaK"/>
    <property type="match status" value="1"/>
</dbReference>
<dbReference type="PANTHER" id="PTHR19375">
    <property type="entry name" value="HEAT SHOCK PROTEIN 70KDA"/>
    <property type="match status" value="1"/>
</dbReference>
<dbReference type="Pfam" id="PF00012">
    <property type="entry name" value="HSP70"/>
    <property type="match status" value="1"/>
</dbReference>
<dbReference type="PRINTS" id="PR00301">
    <property type="entry name" value="HEATSHOCK70"/>
</dbReference>
<dbReference type="SUPFAM" id="SSF53067">
    <property type="entry name" value="Actin-like ATPase domain"/>
    <property type="match status" value="2"/>
</dbReference>
<dbReference type="SUPFAM" id="SSF100934">
    <property type="entry name" value="Heat shock protein 70kD (HSP70), C-terminal subdomain"/>
    <property type="match status" value="1"/>
</dbReference>
<dbReference type="SUPFAM" id="SSF100920">
    <property type="entry name" value="Heat shock protein 70kD (HSP70), peptide-binding domain"/>
    <property type="match status" value="1"/>
</dbReference>
<dbReference type="PROSITE" id="PS00297">
    <property type="entry name" value="HSP70_1"/>
    <property type="match status" value="1"/>
</dbReference>
<dbReference type="PROSITE" id="PS00329">
    <property type="entry name" value="HSP70_2"/>
    <property type="match status" value="1"/>
</dbReference>
<dbReference type="PROSITE" id="PS01036">
    <property type="entry name" value="HSP70_3"/>
    <property type="match status" value="1"/>
</dbReference>
<comment type="function">
    <text evidence="1">Acts as a chaperone.</text>
</comment>
<comment type="induction">
    <text evidence="1">By stress conditions e.g. heat shock (By similarity).</text>
</comment>
<comment type="similarity">
    <text evidence="3">Belongs to the heat shock protein 70 family.</text>
</comment>
<reference key="1">
    <citation type="journal article" date="1994" name="J. Bacteriol.">
        <title>Cloning of the hsp70 (dnaK) genes from Rhizobium meliloti and Pseudomonas cepacia: phylogenetic analyses of mitochondrial origin based on a highly conserved protein sequence.</title>
        <authorList>
            <person name="Falah M."/>
            <person name="Gupta R.S."/>
        </authorList>
    </citation>
    <scope>NUCLEOTIDE SEQUENCE [GENOMIC DNA]</scope>
    <source>
        <strain>ATCC 25416</strain>
    </source>
</reference>
<reference key="2">
    <citation type="journal article" date="2001" name="Proc. Natl. Acad. Sci. U.S.A.">
        <title>Analysis of the chromosome sequence of the legume symbiont Sinorhizobium meliloti strain 1021.</title>
        <authorList>
            <person name="Capela D."/>
            <person name="Barloy-Hubler F."/>
            <person name="Gouzy J."/>
            <person name="Bothe G."/>
            <person name="Ampe F."/>
            <person name="Batut J."/>
            <person name="Boistard P."/>
            <person name="Becker A."/>
            <person name="Boutry M."/>
            <person name="Cadieu E."/>
            <person name="Dreano S."/>
            <person name="Gloux S."/>
            <person name="Godrie T."/>
            <person name="Goffeau A."/>
            <person name="Kahn D."/>
            <person name="Kiss E."/>
            <person name="Lelaure V."/>
            <person name="Masuy D."/>
            <person name="Pohl T."/>
            <person name="Portetelle D."/>
            <person name="Puehler A."/>
            <person name="Purnelle B."/>
            <person name="Ramsperger U."/>
            <person name="Renard C."/>
            <person name="Thebault P."/>
            <person name="Vandenbol M."/>
            <person name="Weidner S."/>
            <person name="Galibert F."/>
        </authorList>
    </citation>
    <scope>NUCLEOTIDE SEQUENCE [LARGE SCALE GENOMIC DNA]</scope>
    <source>
        <strain>1021</strain>
    </source>
</reference>
<reference key="3">
    <citation type="journal article" date="2001" name="Science">
        <title>The composite genome of the legume symbiont Sinorhizobium meliloti.</title>
        <authorList>
            <person name="Galibert F."/>
            <person name="Finan T.M."/>
            <person name="Long S.R."/>
            <person name="Puehler A."/>
            <person name="Abola P."/>
            <person name="Ampe F."/>
            <person name="Barloy-Hubler F."/>
            <person name="Barnett M.J."/>
            <person name="Becker A."/>
            <person name="Boistard P."/>
            <person name="Bothe G."/>
            <person name="Boutry M."/>
            <person name="Bowser L."/>
            <person name="Buhrmester J."/>
            <person name="Cadieu E."/>
            <person name="Capela D."/>
            <person name="Chain P."/>
            <person name="Cowie A."/>
            <person name="Davis R.W."/>
            <person name="Dreano S."/>
            <person name="Federspiel N.A."/>
            <person name="Fisher R.F."/>
            <person name="Gloux S."/>
            <person name="Godrie T."/>
            <person name="Goffeau A."/>
            <person name="Golding B."/>
            <person name="Gouzy J."/>
            <person name="Gurjal M."/>
            <person name="Hernandez-Lucas I."/>
            <person name="Hong A."/>
            <person name="Huizar L."/>
            <person name="Hyman R.W."/>
            <person name="Jones T."/>
            <person name="Kahn D."/>
            <person name="Kahn M.L."/>
            <person name="Kalman S."/>
            <person name="Keating D.H."/>
            <person name="Kiss E."/>
            <person name="Komp C."/>
            <person name="Lelaure V."/>
            <person name="Masuy D."/>
            <person name="Palm C."/>
            <person name="Peck M.C."/>
            <person name="Pohl T.M."/>
            <person name="Portetelle D."/>
            <person name="Purnelle B."/>
            <person name="Ramsperger U."/>
            <person name="Surzycki R."/>
            <person name="Thebault P."/>
            <person name="Vandenbol M."/>
            <person name="Vorhoelter F.J."/>
            <person name="Weidner S."/>
            <person name="Wells D.H."/>
            <person name="Wong K."/>
            <person name="Yeh K.-C."/>
            <person name="Batut J."/>
        </authorList>
    </citation>
    <scope>NUCLEOTIDE SEQUENCE [LARGE SCALE GENOMIC DNA]</scope>
    <source>
        <strain>1021</strain>
    </source>
</reference>
<reference key="4">
    <citation type="journal article" date="1998" name="Mol. Plant Microbe Interact.">
        <title>Expression and regulation of phosphate stress inducible genes in Sinorhizobium meliloti.</title>
        <authorList>
            <person name="Summers M.L."/>
            <person name="Elkins J.G."/>
            <person name="Elliott B.A."/>
            <person name="McDermott T.R."/>
        </authorList>
    </citation>
    <scope>NUCLEOTIDE SEQUENCE [GENOMIC DNA] OF 1-101</scope>
    <source>
        <strain>104A14</strain>
    </source>
</reference>
<protein>
    <recommendedName>
        <fullName>Chaperone protein DnaK</fullName>
    </recommendedName>
    <alternativeName>
        <fullName>HSP70</fullName>
    </alternativeName>
    <alternativeName>
        <fullName>Heat shock 70 kDa protein</fullName>
    </alternativeName>
    <alternativeName>
        <fullName>Heat shock protein 70</fullName>
    </alternativeName>
</protein>
<accession>P42374</accession>
<feature type="chain" id="PRO_0000078525" description="Chaperone protein DnaK">
    <location>
        <begin position="1"/>
        <end position="641"/>
    </location>
</feature>
<feature type="region of interest" description="Disordered" evidence="2">
    <location>
        <begin position="514"/>
        <end position="554"/>
    </location>
</feature>
<feature type="region of interest" description="Disordered" evidence="2">
    <location>
        <begin position="604"/>
        <end position="641"/>
    </location>
</feature>
<feature type="compositionally biased region" description="Basic and acidic residues" evidence="2">
    <location>
        <begin position="514"/>
        <end position="529"/>
    </location>
</feature>
<feature type="compositionally biased region" description="Basic and acidic residues" evidence="2">
    <location>
        <begin position="540"/>
        <end position="554"/>
    </location>
</feature>
<feature type="compositionally biased region" description="Basic and acidic residues" evidence="2">
    <location>
        <begin position="608"/>
        <end position="621"/>
    </location>
</feature>
<feature type="compositionally biased region" description="Acidic residues" evidence="2">
    <location>
        <begin position="622"/>
        <end position="633"/>
    </location>
</feature>
<feature type="modified residue" description="Phosphothreonine; by autocatalysis" evidence="1">
    <location>
        <position position="198"/>
    </location>
</feature>
<feature type="sequence conflict" description="In Ref. 1; AAA64925." evidence="3" ref="1">
    <original>R</original>
    <variation>V</variation>
    <location>
        <position position="405"/>
    </location>
</feature>
<feature type="sequence conflict" description="In Ref. 1; AAA64925." evidence="3" ref="1">
    <original>A</original>
    <variation>R</variation>
    <location>
        <position position="570"/>
    </location>
</feature>
<feature type="sequence conflict" description="In Ref. 1; AAA64925." evidence="3" ref="1">
    <original>DAAA</original>
    <variation>MPPP</variation>
    <location>
        <begin position="611"/>
        <end position="614"/>
    </location>
</feature>
<name>DNAK_RHIME</name>
<gene>
    <name type="primary">dnaK</name>
    <name type="ordered locus">R00182</name>
    <name type="ORF">SMc02857</name>
</gene>
<evidence type="ECO:0000250" key="1"/>
<evidence type="ECO:0000256" key="2">
    <source>
        <dbReference type="SAM" id="MobiDB-lite"/>
    </source>
</evidence>
<evidence type="ECO:0000305" key="3"/>
<proteinExistence type="inferred from homology"/>